<proteinExistence type="evidence at protein level"/>
<organism>
    <name type="scientific">Homo sapiens</name>
    <name type="common">Human</name>
    <dbReference type="NCBI Taxonomy" id="9606"/>
    <lineage>
        <taxon>Eukaryota</taxon>
        <taxon>Metazoa</taxon>
        <taxon>Chordata</taxon>
        <taxon>Craniata</taxon>
        <taxon>Vertebrata</taxon>
        <taxon>Euteleostomi</taxon>
        <taxon>Mammalia</taxon>
        <taxon>Eutheria</taxon>
        <taxon>Euarchontoglires</taxon>
        <taxon>Primates</taxon>
        <taxon>Haplorrhini</taxon>
        <taxon>Catarrhini</taxon>
        <taxon>Hominidae</taxon>
        <taxon>Homo</taxon>
    </lineage>
</organism>
<name>MCM5_HUMAN</name>
<comment type="function">
    <text evidence="2 7 8 9 10">Acts as a component of the MCM2-7 complex (MCM complex) which is the replicative helicase essential for 'once per cell cycle' DNA replication initiation and elongation in eukaryotic cells. Core component of CDC45-MCM-GINS (CMG) helicase, the molecular machine that unwinds template DNA during replication, and around which the replisome is built (PubMed:16899510, PubMed:32453425, PubMed:34694004, PubMed:34700328, PubMed:35585232). The active ATPase sites in the MCM2-7 ring are formed through the interaction surfaces of two neighboring subunits such that a critical structure of a conserved arginine finger motif is provided in trans relative to the ATP-binding site of the Walker A box of the adjacent subunit. The six ATPase active sites, however, are likely to contribute differentially to the complex helicase activity (PubMed:32453425).</text>
</comment>
<comment type="catalytic activity">
    <reaction evidence="15">
        <text>ATP + H2O = ADP + phosphate + H(+)</text>
        <dbReference type="Rhea" id="RHEA:13065"/>
        <dbReference type="ChEBI" id="CHEBI:15377"/>
        <dbReference type="ChEBI" id="CHEBI:15378"/>
        <dbReference type="ChEBI" id="CHEBI:30616"/>
        <dbReference type="ChEBI" id="CHEBI:43474"/>
        <dbReference type="ChEBI" id="CHEBI:456216"/>
        <dbReference type="EC" id="3.6.4.12"/>
    </reaction>
    <physiologicalReaction direction="left-to-right" evidence="15">
        <dbReference type="Rhea" id="RHEA:13066"/>
    </physiologicalReaction>
</comment>
<comment type="subunit">
    <text evidence="2 3 4 5 7 8 9">Component of the MCM2-7 complex (PubMed:16899510, PubMed:17296731). The complex forms a toroidal hexameric ring with the proposed subunit order MCM2-MCM6-MCM4-MCM7-MCM3-MCM5 (PubMed:16899510, PubMed:17296731, PubMed:32453425). Component of the CMG helicase complex, a hexameric ring of related MCM2-7 subunits stabilized by CDC45 and the tetrameric GINS complex (PubMed:32453425, PubMed:34694004, PubMed:34700328). Interacts with ANKRD17 (PubMed:23711367). Interacts with MCMBP (PubMed:17296731). Interacts with TONSL; the interaction is direct (PubMed:26527279).</text>
</comment>
<comment type="interaction">
    <interactant intactId="EBI-359410">
        <id>P33992</id>
    </interactant>
    <interactant intactId="EBI-302023">
        <id>P62805</id>
        <label>H4C9</label>
    </interactant>
    <organismsDiffer>false</organismsDiffer>
    <experiments>2</experiments>
</comment>
<comment type="interaction">
    <interactant intactId="EBI-359410">
        <id>P33992</id>
    </interactant>
    <interactant intactId="EBI-1265089">
        <id>Q9Y468</id>
        <label>L3MBTL1</label>
    </interactant>
    <organismsDiffer>false</organismsDiffer>
    <experiments>2</experiments>
</comment>
<comment type="interaction">
    <interactant intactId="EBI-359410">
        <id>P33992</id>
    </interactant>
    <interactant intactId="EBI-374819">
        <id>P49736</id>
        <label>MCM2</label>
    </interactant>
    <organismsDiffer>false</organismsDiffer>
    <experiments>5</experiments>
</comment>
<comment type="interaction">
    <interactant intactId="EBI-359410">
        <id>P33992</id>
    </interactant>
    <interactant intactId="EBI-355153">
        <id>P25205</id>
        <label>MCM3</label>
    </interactant>
    <organismsDiffer>false</organismsDiffer>
    <experiments>8</experiments>
</comment>
<comment type="interaction">
    <interactant intactId="EBI-359410">
        <id>P33992</id>
    </interactant>
    <interactant intactId="EBI-355924">
        <id>P33993</id>
        <label>MCM7</label>
    </interactant>
    <organismsDiffer>false</organismsDiffer>
    <experiments>10</experiments>
</comment>
<comment type="interaction">
    <interactant intactId="EBI-359410">
        <id>P33992</id>
    </interactant>
    <interactant intactId="EBI-749378">
        <id>Q9BTE3</id>
        <label>MCMBP</label>
    </interactant>
    <organismsDiffer>false</organismsDiffer>
    <experiments>16</experiments>
</comment>
<comment type="subcellular location">
    <subcellularLocation>
        <location evidence="16">Nucleus</location>
    </subcellularLocation>
    <subcellularLocation>
        <location evidence="16">Chromosome</location>
    </subcellularLocation>
    <text evidence="16">Associated with chromatin before the formation of nuclei and detaches from it as DNA replication progresses.</text>
</comment>
<comment type="disease" evidence="6">
    <disease id="DI-05038">
        <name>Meier-Gorlin syndrome 8</name>
        <acronym>MGORS8</acronym>
        <description>A form of Meier-Gorlin syndrome, a syndrome characterized by bilateral microtia, aplasia/hypoplasia of the patellae, and severe intrauterine and postnatal growth retardation with short stature and poor weight gain. Additional clinical findings include anomalies of cranial sutures, microcephaly, apparently low-set and simple ears, microstomia, full lips, highly arched or cleft palate, micrognathia, genitourinary tract anomalies, and various skeletal anomalies. While almost all cases have primordial dwarfism with substantial prenatal and postnatal growth retardation, not all cases have microcephaly, and microtia and absent/hypoplastic patella are absent in some. Despite the presence of microcephaly, intellect is usually normal. MGORS8 inheritance is autosomal recessive.</description>
        <dbReference type="MIM" id="617564"/>
    </disease>
    <text>The disease is caused by variants affecting the gene represented in this entry.</text>
</comment>
<comment type="miscellaneous">
    <text>Early fractionation of eukaryotic MCM proteins yielded a variety of dimeric, trimeric and tetrameric complexes with unclear biological significance. The MCM2-7 hexamer is the proposed physiological active complex.</text>
</comment>
<comment type="similarity">
    <text evidence="14">Belongs to the MCM family.</text>
</comment>
<comment type="online information" name="Atlas of Genetics and Cytogenetics in Oncology and Haematology">
    <link uri="https://atlasgeneticsoncology.org/gene/41321/MCM5"/>
</comment>
<reference key="1">
    <citation type="submission" date="1995-07" db="EMBL/GenBank/DDBJ databases">
        <authorList>
            <person name="Hu B."/>
        </authorList>
    </citation>
    <scope>NUCLEOTIDE SEQUENCE [MRNA]</scope>
    <source>
        <tissue>Cervix carcinoma</tissue>
    </source>
</reference>
<reference key="2">
    <citation type="submission" date="1999-08" db="EMBL/GenBank/DDBJ databases">
        <authorList>
            <person name="Goehring F."/>
            <person name="Jehnichen P."/>
            <person name="Hemmer W.H."/>
        </authorList>
    </citation>
    <scope>SEQUENCE REVISION</scope>
</reference>
<reference key="3">
    <citation type="submission" date="1996-03" db="EMBL/GenBank/DDBJ databases">
        <title>Homo sapiens DNA replication licensing factor (huMCM5).</title>
        <authorList>
            <person name="Mimura S."/>
            <person name="Nishimoto S."/>
            <person name="Kubota Y."/>
            <person name="Takisawa H."/>
            <person name="Nojima H."/>
        </authorList>
    </citation>
    <scope>NUCLEOTIDE SEQUENCE [MRNA]</scope>
</reference>
<reference key="4">
    <citation type="journal article" date="2004" name="Genome Biol.">
        <title>A genome annotation-driven approach to cloning the human ORFeome.</title>
        <authorList>
            <person name="Collins J.E."/>
            <person name="Wright C.L."/>
            <person name="Edwards C.A."/>
            <person name="Davis M.P."/>
            <person name="Grinham J.A."/>
            <person name="Cole C.G."/>
            <person name="Goward M.E."/>
            <person name="Aguado B."/>
            <person name="Mallya M."/>
            <person name="Mokrab Y."/>
            <person name="Huckle E.J."/>
            <person name="Beare D.M."/>
            <person name="Dunham I."/>
        </authorList>
    </citation>
    <scope>NUCLEOTIDE SEQUENCE [LARGE SCALE MRNA]</scope>
</reference>
<reference key="5">
    <citation type="submission" date="2003-01" db="EMBL/GenBank/DDBJ databases">
        <authorList>
            <consortium name="NIEHS SNPs program"/>
        </authorList>
    </citation>
    <scope>NUCLEOTIDE SEQUENCE [GENOMIC DNA]</scope>
    <scope>VARIANTS THR-136; SER-180 AND ILE-258</scope>
</reference>
<reference key="6">
    <citation type="journal article" date="1999" name="Nature">
        <title>The DNA sequence of human chromosome 22.</title>
        <authorList>
            <person name="Dunham I."/>
            <person name="Hunt A.R."/>
            <person name="Collins J.E."/>
            <person name="Bruskiewich R."/>
            <person name="Beare D.M."/>
            <person name="Clamp M."/>
            <person name="Smink L.J."/>
            <person name="Ainscough R."/>
            <person name="Almeida J.P."/>
            <person name="Babbage A.K."/>
            <person name="Bagguley C."/>
            <person name="Bailey J."/>
            <person name="Barlow K.F."/>
            <person name="Bates K.N."/>
            <person name="Beasley O.P."/>
            <person name="Bird C.P."/>
            <person name="Blakey S.E."/>
            <person name="Bridgeman A.M."/>
            <person name="Buck D."/>
            <person name="Burgess J."/>
            <person name="Burrill W.D."/>
            <person name="Burton J."/>
            <person name="Carder C."/>
            <person name="Carter N.P."/>
            <person name="Chen Y."/>
            <person name="Clark G."/>
            <person name="Clegg S.M."/>
            <person name="Cobley V.E."/>
            <person name="Cole C.G."/>
            <person name="Collier R.E."/>
            <person name="Connor R."/>
            <person name="Conroy D."/>
            <person name="Corby N.R."/>
            <person name="Coville G.J."/>
            <person name="Cox A.V."/>
            <person name="Davis J."/>
            <person name="Dawson E."/>
            <person name="Dhami P.D."/>
            <person name="Dockree C."/>
            <person name="Dodsworth S.J."/>
            <person name="Durbin R.M."/>
            <person name="Ellington A.G."/>
            <person name="Evans K.L."/>
            <person name="Fey J.M."/>
            <person name="Fleming K."/>
            <person name="French L."/>
            <person name="Garner A.A."/>
            <person name="Gilbert J.G.R."/>
            <person name="Goward M.E."/>
            <person name="Grafham D.V."/>
            <person name="Griffiths M.N.D."/>
            <person name="Hall C."/>
            <person name="Hall R.E."/>
            <person name="Hall-Tamlyn G."/>
            <person name="Heathcott R.W."/>
            <person name="Ho S."/>
            <person name="Holmes S."/>
            <person name="Hunt S.E."/>
            <person name="Jones M.C."/>
            <person name="Kershaw J."/>
            <person name="Kimberley A.M."/>
            <person name="King A."/>
            <person name="Laird G.K."/>
            <person name="Langford C.F."/>
            <person name="Leversha M.A."/>
            <person name="Lloyd C."/>
            <person name="Lloyd D.M."/>
            <person name="Martyn I.D."/>
            <person name="Mashreghi-Mohammadi M."/>
            <person name="Matthews L.H."/>
            <person name="Mccann O.T."/>
            <person name="Mcclay J."/>
            <person name="Mclaren S."/>
            <person name="McMurray A.A."/>
            <person name="Milne S.A."/>
            <person name="Mortimore B.J."/>
            <person name="Odell C.N."/>
            <person name="Pavitt R."/>
            <person name="Pearce A.V."/>
            <person name="Pearson D."/>
            <person name="Phillimore B.J.C.T."/>
            <person name="Phillips S.H."/>
            <person name="Plumb R.W."/>
            <person name="Ramsay H."/>
            <person name="Ramsey Y."/>
            <person name="Rogers L."/>
            <person name="Ross M.T."/>
            <person name="Scott C.E."/>
            <person name="Sehra H.K."/>
            <person name="Skuce C.D."/>
            <person name="Smalley S."/>
            <person name="Smith M.L."/>
            <person name="Soderlund C."/>
            <person name="Spragon L."/>
            <person name="Steward C.A."/>
            <person name="Sulston J.E."/>
            <person name="Swann R.M."/>
            <person name="Vaudin M."/>
            <person name="Wall M."/>
            <person name="Wallis J.M."/>
            <person name="Whiteley M.N."/>
            <person name="Willey D.L."/>
            <person name="Williams L."/>
            <person name="Williams S.A."/>
            <person name="Williamson H."/>
            <person name="Wilmer T.E."/>
            <person name="Wilming L."/>
            <person name="Wright C.L."/>
            <person name="Hubbard T."/>
            <person name="Bentley D.R."/>
            <person name="Beck S."/>
            <person name="Rogers J."/>
            <person name="Shimizu N."/>
            <person name="Minoshima S."/>
            <person name="Kawasaki K."/>
            <person name="Sasaki T."/>
            <person name="Asakawa S."/>
            <person name="Kudoh J."/>
            <person name="Shintani A."/>
            <person name="Shibuya K."/>
            <person name="Yoshizaki Y."/>
            <person name="Aoki N."/>
            <person name="Mitsuyama S."/>
            <person name="Roe B.A."/>
            <person name="Chen F."/>
            <person name="Chu L."/>
            <person name="Crabtree J."/>
            <person name="Deschamps S."/>
            <person name="Do A."/>
            <person name="Do T."/>
            <person name="Dorman A."/>
            <person name="Fang F."/>
            <person name="Fu Y."/>
            <person name="Hu P."/>
            <person name="Hua A."/>
            <person name="Kenton S."/>
            <person name="Lai H."/>
            <person name="Lao H.I."/>
            <person name="Lewis J."/>
            <person name="Lewis S."/>
            <person name="Lin S.-P."/>
            <person name="Loh P."/>
            <person name="Malaj E."/>
            <person name="Nguyen T."/>
            <person name="Pan H."/>
            <person name="Phan S."/>
            <person name="Qi S."/>
            <person name="Qian Y."/>
            <person name="Ray L."/>
            <person name="Ren Q."/>
            <person name="Shaull S."/>
            <person name="Sloan D."/>
            <person name="Song L."/>
            <person name="Wang Q."/>
            <person name="Wang Y."/>
            <person name="Wang Z."/>
            <person name="White J."/>
            <person name="Willingham D."/>
            <person name="Wu H."/>
            <person name="Yao Z."/>
            <person name="Zhan M."/>
            <person name="Zhang G."/>
            <person name="Chissoe S."/>
            <person name="Murray J."/>
            <person name="Miller N."/>
            <person name="Minx P."/>
            <person name="Fulton R."/>
            <person name="Johnson D."/>
            <person name="Bemis G."/>
            <person name="Bentley D."/>
            <person name="Bradshaw H."/>
            <person name="Bourne S."/>
            <person name="Cordes M."/>
            <person name="Du Z."/>
            <person name="Fulton L."/>
            <person name="Goela D."/>
            <person name="Graves T."/>
            <person name="Hawkins J."/>
            <person name="Hinds K."/>
            <person name="Kemp K."/>
            <person name="Latreille P."/>
            <person name="Layman D."/>
            <person name="Ozersky P."/>
            <person name="Rohlfing T."/>
            <person name="Scheet P."/>
            <person name="Walker C."/>
            <person name="Wamsley A."/>
            <person name="Wohldmann P."/>
            <person name="Pepin K."/>
            <person name="Nelson J."/>
            <person name="Korf I."/>
            <person name="Bedell J.A."/>
            <person name="Hillier L.W."/>
            <person name="Mardis E."/>
            <person name="Waterston R."/>
            <person name="Wilson R."/>
            <person name="Emanuel B.S."/>
            <person name="Shaikh T."/>
            <person name="Kurahashi H."/>
            <person name="Saitta S."/>
            <person name="Budarf M.L."/>
            <person name="McDermid H.E."/>
            <person name="Johnson A."/>
            <person name="Wong A.C.C."/>
            <person name="Morrow B.E."/>
            <person name="Edelmann L."/>
            <person name="Kim U.J."/>
            <person name="Shizuya H."/>
            <person name="Simon M.I."/>
            <person name="Dumanski J.P."/>
            <person name="Peyrard M."/>
            <person name="Kedra D."/>
            <person name="Seroussi E."/>
            <person name="Fransson I."/>
            <person name="Tapia I."/>
            <person name="Bruder C.E."/>
            <person name="O'Brien K.P."/>
            <person name="Wilkinson P."/>
            <person name="Bodenteich A."/>
            <person name="Hartman K."/>
            <person name="Hu X."/>
            <person name="Khan A.S."/>
            <person name="Lane L."/>
            <person name="Tilahun Y."/>
            <person name="Wright H."/>
        </authorList>
    </citation>
    <scope>NUCLEOTIDE SEQUENCE [LARGE SCALE GENOMIC DNA]</scope>
</reference>
<reference key="7">
    <citation type="journal article" date="2004" name="Genome Res.">
        <title>The status, quality, and expansion of the NIH full-length cDNA project: the Mammalian Gene Collection (MGC).</title>
        <authorList>
            <consortium name="The MGC Project Team"/>
        </authorList>
    </citation>
    <scope>NUCLEOTIDE SEQUENCE [LARGE SCALE MRNA]</scope>
    <source>
        <tissue>Lymph</tissue>
        <tissue>Placenta</tissue>
    </source>
</reference>
<reference key="8">
    <citation type="journal article" date="1993" name="Nucleic Acids Res.">
        <title>The P1 family: a new class of nuclear mammalian proteins related to the yeast Mcm replication proteins.</title>
        <authorList>
            <person name="Hu B."/>
            <person name="Burkhart R."/>
            <person name="Schulte D."/>
            <person name="Musahl C."/>
            <person name="Knippers R."/>
        </authorList>
    </citation>
    <scope>NUCLEOTIDE SEQUENCE [MRNA] OF 352-590</scope>
    <source>
        <tissue>Cervix</tissue>
    </source>
</reference>
<reference key="9">
    <citation type="journal article" date="2006" name="Mol. Biol. Cell">
        <title>Essential role of phosphorylation of MCM2 by Cdc7/Dbf4 in the initiation of DNA replication in mammalian cells.</title>
        <authorList>
            <person name="Tsuji T."/>
            <person name="Ficarro S.B."/>
            <person name="Jiang W."/>
        </authorList>
    </citation>
    <scope>IDENTIFICATION IN THE MCM2-7 COMPLEX</scope>
    <scope>FUNCTION</scope>
</reference>
<reference key="10">
    <citation type="journal article" date="2007" name="Mol. Cell. Biol.">
        <title>Identification and characterization of a novel component of the human minichromosome maintenance complex.</title>
        <authorList>
            <person name="Sakwe A.M."/>
            <person name="Nguyen T."/>
            <person name="Athanasopoulos V."/>
            <person name="Shire K."/>
            <person name="Frappier L."/>
        </authorList>
    </citation>
    <scope>INTERACTION WITH MCMBP</scope>
    <scope>IDENTIFICATION IN THE MCM2-7 COMPLEX</scope>
    <scope>IDENTIFICATION BY MASS SPECTROMETRY</scope>
</reference>
<reference key="11">
    <citation type="journal article" date="2009" name="Anal. Chem.">
        <title>Lys-N and trypsin cover complementary parts of the phosphoproteome in a refined SCX-based approach.</title>
        <authorList>
            <person name="Gauci S."/>
            <person name="Helbig A.O."/>
            <person name="Slijper M."/>
            <person name="Krijgsveld J."/>
            <person name="Heck A.J."/>
            <person name="Mohammed S."/>
        </authorList>
    </citation>
    <scope>ACETYLATION [LARGE SCALE ANALYSIS] AT SER-2</scope>
    <scope>CLEAVAGE OF INITIATOR METHIONINE [LARGE SCALE ANALYSIS]</scope>
    <scope>IDENTIFICATION BY MASS SPECTROMETRY [LARGE SCALE ANALYSIS]</scope>
</reference>
<reference key="12">
    <citation type="journal article" date="2009" name="Science">
        <title>Lysine acetylation targets protein complexes and co-regulates major cellular functions.</title>
        <authorList>
            <person name="Choudhary C."/>
            <person name="Kumar C."/>
            <person name="Gnad F."/>
            <person name="Nielsen M.L."/>
            <person name="Rehman M."/>
            <person name="Walther T.C."/>
            <person name="Olsen J.V."/>
            <person name="Mann M."/>
        </authorList>
    </citation>
    <scope>ACETYLATION [LARGE SCALE ANALYSIS] AT LYS-392; LYS-396 AND LYS-696</scope>
    <scope>IDENTIFICATION BY MASS SPECTROMETRY [LARGE SCALE ANALYSIS]</scope>
</reference>
<reference key="13">
    <citation type="journal article" date="2011" name="BMC Syst. Biol.">
        <title>Initial characterization of the human central proteome.</title>
        <authorList>
            <person name="Burkard T.R."/>
            <person name="Planyavsky M."/>
            <person name="Kaupe I."/>
            <person name="Breitwieser F.P."/>
            <person name="Buerckstuemmer T."/>
            <person name="Bennett K.L."/>
            <person name="Superti-Furga G."/>
            <person name="Colinge J."/>
        </authorList>
    </citation>
    <scope>IDENTIFICATION BY MASS SPECTROMETRY [LARGE SCALE ANALYSIS]</scope>
</reference>
<reference key="14">
    <citation type="journal article" date="2012" name="Mol. Cell. Proteomics">
        <title>Comparative large-scale characterisation of plant vs. mammal proteins reveals similar and idiosyncratic N-alpha acetylation features.</title>
        <authorList>
            <person name="Bienvenut W.V."/>
            <person name="Sumpton D."/>
            <person name="Martinez A."/>
            <person name="Lilla S."/>
            <person name="Espagne C."/>
            <person name="Meinnel T."/>
            <person name="Giglione C."/>
        </authorList>
    </citation>
    <scope>ACETYLATION [LARGE SCALE ANALYSIS] AT SER-2</scope>
    <scope>CLEAVAGE OF INITIATOR METHIONINE [LARGE SCALE ANALYSIS]</scope>
    <scope>IDENTIFICATION BY MASS SPECTROMETRY [LARGE SCALE ANALYSIS]</scope>
</reference>
<reference key="15">
    <citation type="journal article" date="2012" name="Proc. Natl. Acad. Sci. U.S.A.">
        <title>N-terminal acetylome analyses and functional insights of the N-terminal acetyltransferase NatB.</title>
        <authorList>
            <person name="Van Damme P."/>
            <person name="Lasa M."/>
            <person name="Polevoda B."/>
            <person name="Gazquez C."/>
            <person name="Elosegui-Artola A."/>
            <person name="Kim D.S."/>
            <person name="De Juan-Pardo E."/>
            <person name="Demeyer K."/>
            <person name="Hole K."/>
            <person name="Larrea E."/>
            <person name="Timmerman E."/>
            <person name="Prieto J."/>
            <person name="Arnesen T."/>
            <person name="Sherman F."/>
            <person name="Gevaert K."/>
            <person name="Aldabe R."/>
        </authorList>
    </citation>
    <scope>ACETYLATION [LARGE SCALE ANALYSIS] AT SER-2</scope>
    <scope>CLEAVAGE OF INITIATOR METHIONINE [LARGE SCALE ANALYSIS]</scope>
    <scope>IDENTIFICATION BY MASS SPECTROMETRY [LARGE SCALE ANALYSIS]</scope>
</reference>
<reference key="16">
    <citation type="journal article" date="2013" name="FEBS Lett.">
        <title>A role for the Ankyrin repeat containing protein Ankrd17 in Nod1- and Nod2-mediated inflammatory responses.</title>
        <authorList>
            <person name="Menning M."/>
            <person name="Kufer T.A."/>
        </authorList>
    </citation>
    <scope>INTERACTION WITH ANKRD17</scope>
</reference>
<reference key="17">
    <citation type="journal article" date="2013" name="J. Proteome Res.">
        <title>Toward a comprehensive characterization of a human cancer cell phosphoproteome.</title>
        <authorList>
            <person name="Zhou H."/>
            <person name="Di Palma S."/>
            <person name="Preisinger C."/>
            <person name="Peng M."/>
            <person name="Polat A.N."/>
            <person name="Heck A.J."/>
            <person name="Mohammed S."/>
        </authorList>
    </citation>
    <scope>PHOSPHORYLATION [LARGE SCALE ANALYSIS] AT SER-315 AND SER-605</scope>
    <scope>IDENTIFICATION BY MASS SPECTROMETRY [LARGE SCALE ANALYSIS]</scope>
    <source>
        <tissue>Erythroleukemia</tissue>
    </source>
</reference>
<reference key="18">
    <citation type="journal article" date="2015" name="Mol. Cell">
        <title>Analysis of the histone H3.1 interactome: a suitable chaperone for the right event.</title>
        <authorList>
            <person name="Campos E.I."/>
            <person name="Smits A.H."/>
            <person name="Kang Y.H."/>
            <person name="Landry S."/>
            <person name="Escobar T.M."/>
            <person name="Nayak S."/>
            <person name="Ueberheide B.M."/>
            <person name="Durocher D."/>
            <person name="Vermeulen M."/>
            <person name="Hurwitz J."/>
            <person name="Reinberg D."/>
        </authorList>
    </citation>
    <scope>INTERACTION WITH TONSL</scope>
</reference>
<reference key="19">
    <citation type="journal article" date="2022" name="Nature">
        <title>Fast and efficient DNA replication with purified human proteins.</title>
        <authorList>
            <person name="Baris Y."/>
            <person name="Taylor M.R.G."/>
            <person name="Aria V."/>
            <person name="Yeeles J.T.P."/>
        </authorList>
    </citation>
    <scope>FUNCTION</scope>
    <scope>SUBCELLULAR LOCATION</scope>
</reference>
<reference evidence="17 18" key="20">
    <citation type="journal article" date="2020" name="Nucleic Acids Res.">
        <title>CryoEM structures of human CMG-ATPgammaS-DNA and CMG-AND-1 complexes.</title>
        <authorList>
            <person name="Rzechorzek N.J."/>
            <person name="Hardwick S.W."/>
            <person name="Jatikusumo V.A."/>
            <person name="Chirgadze D.Y."/>
            <person name="Pellegrini L."/>
        </authorList>
    </citation>
    <scope>STRUCTURE BY ELECTRON MICROSCOPY (3.29 ANGSTROMS) IN COMPLEXES WITH ADP AND WDHD1 IN CMG COMPLEX</scope>
    <scope>SUBUNIT</scope>
</reference>
<reference evidence="20" key="21">
    <citation type="journal article" date="2021" name="Nature">
        <title>A conserved mechanism for regulating replisome disassembly in eukaryotes.</title>
        <authorList>
            <person name="Jenkyn-Bedford M."/>
            <person name="Jones M.L."/>
            <person name="Baris Y."/>
            <person name="Labib K.P.M."/>
            <person name="Cannone G."/>
            <person name="Yeeles J.T.P."/>
            <person name="Deegan T.D."/>
        </authorList>
    </citation>
    <scope>STRUCTURE BY ELECTRON MICROSCOPY (2.80 ANGSTROMS) IN REPLISOME</scope>
    <scope>SUBUNIT</scope>
</reference>
<reference evidence="19" key="22">
    <citation type="journal article" date="2021" name="EMBO J.">
        <title>Structure of a human replisome shows the organisation and interactions of a DNA replication machine.</title>
        <authorList>
            <person name="Jones M.L."/>
            <person name="Baris Y."/>
            <person name="Taylor M.R.G."/>
            <person name="Yeeles J.T.P."/>
        </authorList>
    </citation>
    <scope>STRUCTURE BY ELECTRON MICROSCOPY (3.20 ANGSTROMS) IN REPLISOME</scope>
    <scope>SUBUNIT</scope>
</reference>
<reference key="23">
    <citation type="journal article" date="2017" name="Eur. J. Hum. Genet.">
        <title>MCM5: a new actor in the link between DNA replication and Meier-Gorlin syndrome.</title>
        <authorList>
            <person name="Vetro A."/>
            <person name="Savasta S."/>
            <person name="Russo Raucci A."/>
            <person name="Cerqua C."/>
            <person name="Sartori G."/>
            <person name="Limongelli I."/>
            <person name="Forlino A."/>
            <person name="Maruelli S."/>
            <person name="Perucca P."/>
            <person name="Vergani D."/>
            <person name="Mazzini G."/>
            <person name="Mattevi A."/>
            <person name="Stivala L.A."/>
            <person name="Salviati L."/>
            <person name="Zuffardi O."/>
        </authorList>
    </citation>
    <scope>INVOLVEMENT IN MGORS8</scope>
    <scope>VARIANT MGORS8 ILE-466</scope>
    <scope>SUBCELLULAR LOCATION</scope>
</reference>
<accession>P33992</accession>
<accession>O60785</accession>
<accession>Q14578</accession>
<accession>Q9BTJ4</accession>
<accession>Q9BWL8</accession>
<sequence>MSGFDDPGIFYSDSFGGDAQADEGQARKSQLQRRFKEFLRQYRVGTDRTGFTFKYRDELKRHYNLGEYWIEVEMEDLASFDEDLADYLYKQPAEHLQLLEEAAKEVADEVTRPRPSGEEVLQDIQVMLKSDASPSSIRSLKSDMMSHLVKIPGIIIAASAVRAKATRISIQCRSCRNTLTNIAMRPGLEGYALPRKCNTDQAGRPKCPLDPYFIMPDKCKCVDFQTLKLQELPDAVPHGEMPRHMQLYCDRYLCDKVVPGNRVTIMGIYSIKKFGLTTSRGRDRVGVGIRSSYIRVLGIQVDTDGSGRSFAGAVSPQEEEEFRRLAALPNVYEVISKSIAPSIFGGTDMKKAIACLLFGGSRKRLPDGLTRRGDINLLMLGDPGTAKSQLLKFVEKCSPIGVYTSGKGSSAAGLTASVMRDPSSRNFIMEGGAMVLADGGVVCIDEFDKMREDDRVAIHEAMEQQTISIAKAGITTTLNSRCSVLAAANSVFGRWDETKGEDNIDFMPTILSRFDMIFIVKDEHNEERDVMLAKHVITLHVSALTQTQAVEGEIDLAKLKKFIAYCRVKCGPRLSAEAAEKLKNRYIIMRSGARQHERDSDRRSSIPITVRQLEAIVRIAEALSKMKLQPFATEADVEEALRLFQVSTLDAALSGTLSGVEGFTSQEDQEMLSRIEKQLKRRFAIGSQVSEHSIIKDFTKQKYPEHAIHKVLQLMLRRGEIQHRMQRKVLYRLK</sequence>
<protein>
    <recommendedName>
        <fullName evidence="13">DNA replication licensing factor MCM5</fullName>
        <ecNumber evidence="15">3.6.4.12</ecNumber>
    </recommendedName>
    <alternativeName>
        <fullName evidence="1">CDC46 homolog</fullName>
    </alternativeName>
    <alternativeName>
        <fullName evidence="12">P1-CDC46</fullName>
    </alternativeName>
</protein>
<keyword id="KW-0002">3D-structure</keyword>
<keyword id="KW-0007">Acetylation</keyword>
<keyword id="KW-0067">ATP-binding</keyword>
<keyword id="KW-0131">Cell cycle</keyword>
<keyword id="KW-0158">Chromosome</keyword>
<keyword id="KW-0225">Disease variant</keyword>
<keyword id="KW-0235">DNA replication</keyword>
<keyword id="KW-0238">DNA-binding</keyword>
<keyword id="KW-0242">Dwarfism</keyword>
<keyword id="KW-0347">Helicase</keyword>
<keyword id="KW-0378">Hydrolase</keyword>
<keyword id="KW-0547">Nucleotide-binding</keyword>
<keyword id="KW-0539">Nucleus</keyword>
<keyword id="KW-0597">Phosphoprotein</keyword>
<keyword id="KW-1267">Proteomics identification</keyword>
<keyword id="KW-1185">Reference proteome</keyword>
<dbReference type="EC" id="3.6.4.12" evidence="15"/>
<dbReference type="EMBL" id="X74795">
    <property type="protein sequence ID" value="CAA52802.2"/>
    <property type="molecule type" value="mRNA"/>
</dbReference>
<dbReference type="EMBL" id="D83986">
    <property type="protein sequence ID" value="BAA12176.1"/>
    <property type="molecule type" value="mRNA"/>
</dbReference>
<dbReference type="EMBL" id="CR456517">
    <property type="protein sequence ID" value="CAG30403.1"/>
    <property type="molecule type" value="mRNA"/>
</dbReference>
<dbReference type="EMBL" id="AY212028">
    <property type="protein sequence ID" value="AAO21127.1"/>
    <property type="molecule type" value="Genomic_DNA"/>
</dbReference>
<dbReference type="EMBL" id="Z82244">
    <property type="status" value="NOT_ANNOTATED_CDS"/>
    <property type="molecule type" value="Genomic_DNA"/>
</dbReference>
<dbReference type="EMBL" id="BC000142">
    <property type="protein sequence ID" value="AAH00142.1"/>
    <property type="molecule type" value="mRNA"/>
</dbReference>
<dbReference type="EMBL" id="BC003656">
    <property type="protein sequence ID" value="AAH03656.1"/>
    <property type="molecule type" value="mRNA"/>
</dbReference>
<dbReference type="CCDS" id="CCDS13915.1"/>
<dbReference type="PIR" id="I38080">
    <property type="entry name" value="I38080"/>
</dbReference>
<dbReference type="RefSeq" id="NP_006730.2">
    <property type="nucleotide sequence ID" value="NM_006739.3"/>
</dbReference>
<dbReference type="PDB" id="6XTX">
    <property type="method" value="EM"/>
    <property type="resolution" value="3.29 A"/>
    <property type="chains" value="5=1-734"/>
</dbReference>
<dbReference type="PDB" id="6XTY">
    <property type="method" value="EM"/>
    <property type="resolution" value="6.77 A"/>
    <property type="chains" value="5=1-734"/>
</dbReference>
<dbReference type="PDB" id="7PFO">
    <property type="method" value="EM"/>
    <property type="resolution" value="3.20 A"/>
    <property type="chains" value="5=1-734"/>
</dbReference>
<dbReference type="PDB" id="7PLO">
    <property type="method" value="EM"/>
    <property type="resolution" value="2.80 A"/>
    <property type="chains" value="5=1-734"/>
</dbReference>
<dbReference type="PDB" id="7W1Y">
    <property type="method" value="EM"/>
    <property type="resolution" value="2.59 A"/>
    <property type="chains" value="5/D=1-734"/>
</dbReference>
<dbReference type="PDB" id="7W68">
    <property type="method" value="EM"/>
    <property type="resolution" value="4.40 A"/>
    <property type="chains" value="D=1-734"/>
</dbReference>
<dbReference type="PDB" id="8B9D">
    <property type="method" value="EM"/>
    <property type="resolution" value="3.40 A"/>
    <property type="chains" value="5=1-734"/>
</dbReference>
<dbReference type="PDB" id="8S09">
    <property type="method" value="EM"/>
    <property type="resolution" value="3.10 A"/>
    <property type="chains" value="5/D=1-734"/>
</dbReference>
<dbReference type="PDB" id="8S0A">
    <property type="method" value="EM"/>
    <property type="resolution" value="3.20 A"/>
    <property type="chains" value="5=1-734"/>
</dbReference>
<dbReference type="PDB" id="8S0B">
    <property type="method" value="EM"/>
    <property type="resolution" value="3.60 A"/>
    <property type="chains" value="5=1-734"/>
</dbReference>
<dbReference type="PDB" id="8S0D">
    <property type="method" value="EM"/>
    <property type="resolution" value="3.60 A"/>
    <property type="chains" value="5=1-734"/>
</dbReference>
<dbReference type="PDB" id="8S0E">
    <property type="method" value="EM"/>
    <property type="resolution" value="3.80 A"/>
    <property type="chains" value="5=1-734"/>
</dbReference>
<dbReference type="PDB" id="8S0F">
    <property type="method" value="EM"/>
    <property type="resolution" value="4.10 A"/>
    <property type="chains" value="5=1-734"/>
</dbReference>
<dbReference type="PDB" id="8W0E">
    <property type="method" value="EM"/>
    <property type="resolution" value="3.40 A"/>
    <property type="chains" value="5=1-734"/>
</dbReference>
<dbReference type="PDB" id="8W0F">
    <property type="method" value="EM"/>
    <property type="resolution" value="2.80 A"/>
    <property type="chains" value="5/D=1-734"/>
</dbReference>
<dbReference type="PDB" id="8W0G">
    <property type="method" value="EM"/>
    <property type="resolution" value="3.80 A"/>
    <property type="chains" value="5/D=1-734"/>
</dbReference>
<dbReference type="PDB" id="8W0I">
    <property type="method" value="EM"/>
    <property type="resolution" value="3.50 A"/>
    <property type="chains" value="5=1-734"/>
</dbReference>
<dbReference type="PDB" id="9CAQ">
    <property type="method" value="EM"/>
    <property type="resolution" value="3.20 A"/>
    <property type="chains" value="5/D=1-734"/>
</dbReference>
<dbReference type="PDBsum" id="6XTX"/>
<dbReference type="PDBsum" id="6XTY"/>
<dbReference type="PDBsum" id="7PFO"/>
<dbReference type="PDBsum" id="7PLO"/>
<dbReference type="PDBsum" id="7W1Y"/>
<dbReference type="PDBsum" id="7W68"/>
<dbReference type="PDBsum" id="8B9D"/>
<dbReference type="PDBsum" id="8S09"/>
<dbReference type="PDBsum" id="8S0A"/>
<dbReference type="PDBsum" id="8S0B"/>
<dbReference type="PDBsum" id="8S0D"/>
<dbReference type="PDBsum" id="8S0E"/>
<dbReference type="PDBsum" id="8S0F"/>
<dbReference type="PDBsum" id="8W0E"/>
<dbReference type="PDBsum" id="8W0F"/>
<dbReference type="PDBsum" id="8W0G"/>
<dbReference type="PDBsum" id="8W0I"/>
<dbReference type="PDBsum" id="9CAQ"/>
<dbReference type="EMDB" id="EMD-10619"/>
<dbReference type="EMDB" id="EMD-10621"/>
<dbReference type="EMDB" id="EMD-13375"/>
<dbReference type="EMDB" id="EMD-13494"/>
<dbReference type="EMDB" id="EMD-19618"/>
<dbReference type="EMDB" id="EMD-19619"/>
<dbReference type="EMDB" id="EMD-19620"/>
<dbReference type="EMDB" id="EMD-19622"/>
<dbReference type="EMDB" id="EMD-19623"/>
<dbReference type="EMDB" id="EMD-19624"/>
<dbReference type="EMDB" id="EMD-32258"/>
<dbReference type="EMDB" id="EMD-32326"/>
<dbReference type="EMDB" id="EMD-43707"/>
<dbReference type="EMDB" id="EMD-43708"/>
<dbReference type="EMDB" id="EMD-43709"/>
<dbReference type="EMDB" id="EMD-43710"/>
<dbReference type="EMDB" id="EMD-45400"/>
<dbReference type="SMR" id="P33992"/>
<dbReference type="BioGRID" id="110342">
    <property type="interactions" value="448"/>
</dbReference>
<dbReference type="ComplexPortal" id="CPX-2940">
    <property type="entry name" value="MCM complex"/>
</dbReference>
<dbReference type="CORUM" id="P33992"/>
<dbReference type="DIP" id="DIP-27578N"/>
<dbReference type="FunCoup" id="P33992">
    <property type="interactions" value="2011"/>
</dbReference>
<dbReference type="IntAct" id="P33992">
    <property type="interactions" value="128"/>
</dbReference>
<dbReference type="MINT" id="P33992"/>
<dbReference type="STRING" id="9606.ENSP00000216122"/>
<dbReference type="ChEMBL" id="CHEMBL4630815"/>
<dbReference type="GlyGen" id="P33992">
    <property type="glycosylation" value="1 site, 1 O-linked glycan (1 site)"/>
</dbReference>
<dbReference type="iPTMnet" id="P33992"/>
<dbReference type="MetOSite" id="P33992"/>
<dbReference type="PhosphoSitePlus" id="P33992"/>
<dbReference type="SwissPalm" id="P33992"/>
<dbReference type="BioMuta" id="MCM5"/>
<dbReference type="DMDM" id="19858646"/>
<dbReference type="jPOST" id="P33992"/>
<dbReference type="MassIVE" id="P33992"/>
<dbReference type="PaxDb" id="9606-ENSP00000216122"/>
<dbReference type="PeptideAtlas" id="P33992"/>
<dbReference type="ProteomicsDB" id="54935"/>
<dbReference type="Pumba" id="P33992"/>
<dbReference type="Antibodypedia" id="244">
    <property type="antibodies" value="920 antibodies from 38 providers"/>
</dbReference>
<dbReference type="DNASU" id="4174"/>
<dbReference type="Ensembl" id="ENST00000216122.9">
    <property type="protein sequence ID" value="ENSP00000216122.3"/>
    <property type="gene ID" value="ENSG00000100297.16"/>
</dbReference>
<dbReference type="GeneID" id="4174"/>
<dbReference type="KEGG" id="hsa:4174"/>
<dbReference type="MANE-Select" id="ENST00000216122.9">
    <property type="protein sequence ID" value="ENSP00000216122.3"/>
    <property type="RefSeq nucleotide sequence ID" value="NM_006739.4"/>
    <property type="RefSeq protein sequence ID" value="NP_006730.2"/>
</dbReference>
<dbReference type="UCSC" id="uc003anu.5">
    <property type="organism name" value="human"/>
</dbReference>
<dbReference type="AGR" id="HGNC:6948"/>
<dbReference type="CTD" id="4174"/>
<dbReference type="DisGeNET" id="4174"/>
<dbReference type="GeneCards" id="MCM5"/>
<dbReference type="HGNC" id="HGNC:6948">
    <property type="gene designation" value="MCM5"/>
</dbReference>
<dbReference type="HPA" id="ENSG00000100297">
    <property type="expression patterns" value="Tissue enhanced (bone)"/>
</dbReference>
<dbReference type="MalaCards" id="MCM5"/>
<dbReference type="MIM" id="602696">
    <property type="type" value="gene"/>
</dbReference>
<dbReference type="MIM" id="617564">
    <property type="type" value="phenotype"/>
</dbReference>
<dbReference type="neXtProt" id="NX_P33992"/>
<dbReference type="OpenTargets" id="ENSG00000100297"/>
<dbReference type="PharmGKB" id="PA30695"/>
<dbReference type="VEuPathDB" id="HostDB:ENSG00000100297"/>
<dbReference type="eggNOG" id="KOG0481">
    <property type="taxonomic scope" value="Eukaryota"/>
</dbReference>
<dbReference type="GeneTree" id="ENSGT01050000244824"/>
<dbReference type="InParanoid" id="P33992"/>
<dbReference type="OMA" id="ITYCKTR"/>
<dbReference type="OrthoDB" id="10036721at2759"/>
<dbReference type="PAN-GO" id="P33992">
    <property type="GO annotations" value="7 GO annotations based on evolutionary models"/>
</dbReference>
<dbReference type="PhylomeDB" id="P33992"/>
<dbReference type="TreeFam" id="TF105653"/>
<dbReference type="PathwayCommons" id="P33992"/>
<dbReference type="Reactome" id="R-HSA-176187">
    <property type="pathway name" value="Activation of ATR in response to replication stress"/>
</dbReference>
<dbReference type="Reactome" id="R-HSA-176974">
    <property type="pathway name" value="Unwinding of DNA"/>
</dbReference>
<dbReference type="Reactome" id="R-HSA-68867">
    <property type="pathway name" value="Assembly of the pre-replicative complex"/>
</dbReference>
<dbReference type="Reactome" id="R-HSA-68949">
    <property type="pathway name" value="Orc1 removal from chromatin"/>
</dbReference>
<dbReference type="Reactome" id="R-HSA-68962">
    <property type="pathway name" value="Activation of the pre-replicative complex"/>
</dbReference>
<dbReference type="Reactome" id="R-HSA-69052">
    <property type="pathway name" value="Switching of origins to a post-replicative state"/>
</dbReference>
<dbReference type="Reactome" id="R-HSA-9825895">
    <property type="pathway name" value="Regulation of MITF-M-dependent genes involved in DNA replication, damage repair and senescence"/>
</dbReference>
<dbReference type="SignaLink" id="P33992"/>
<dbReference type="SIGNOR" id="P33992"/>
<dbReference type="BioGRID-ORCS" id="4174">
    <property type="hits" value="829 hits in 1173 CRISPR screens"/>
</dbReference>
<dbReference type="CD-CODE" id="8C2F96ED">
    <property type="entry name" value="Centrosome"/>
</dbReference>
<dbReference type="CD-CODE" id="91857CE7">
    <property type="entry name" value="Nucleolus"/>
</dbReference>
<dbReference type="CD-CODE" id="DEE660B4">
    <property type="entry name" value="Stress granule"/>
</dbReference>
<dbReference type="ChiTaRS" id="MCM5">
    <property type="organism name" value="human"/>
</dbReference>
<dbReference type="GeneWiki" id="MCM5"/>
<dbReference type="GenomeRNAi" id="4174"/>
<dbReference type="Pharos" id="P33992">
    <property type="development level" value="Tbio"/>
</dbReference>
<dbReference type="PRO" id="PR:P33992"/>
<dbReference type="Proteomes" id="UP000005640">
    <property type="component" value="Chromosome 22"/>
</dbReference>
<dbReference type="RNAct" id="P33992">
    <property type="molecule type" value="protein"/>
</dbReference>
<dbReference type="Bgee" id="ENSG00000100297">
    <property type="expression patterns" value="Expressed in ventricular zone and 165 other cell types or tissues"/>
</dbReference>
<dbReference type="ExpressionAtlas" id="P33992">
    <property type="expression patterns" value="baseline and differential"/>
</dbReference>
<dbReference type="GO" id="GO:0000781">
    <property type="term" value="C:chromosome, telomeric region"/>
    <property type="evidence" value="ECO:0007005"/>
    <property type="project" value="BHF-UCL"/>
</dbReference>
<dbReference type="GO" id="GO:0071162">
    <property type="term" value="C:CMG complex"/>
    <property type="evidence" value="ECO:0000353"/>
    <property type="project" value="ComplexPortal"/>
</dbReference>
<dbReference type="GO" id="GO:0042555">
    <property type="term" value="C:MCM complex"/>
    <property type="evidence" value="ECO:0000314"/>
    <property type="project" value="UniProtKB"/>
</dbReference>
<dbReference type="GO" id="GO:0016020">
    <property type="term" value="C:membrane"/>
    <property type="evidence" value="ECO:0007005"/>
    <property type="project" value="UniProtKB"/>
</dbReference>
<dbReference type="GO" id="GO:0005654">
    <property type="term" value="C:nucleoplasm"/>
    <property type="evidence" value="ECO:0000314"/>
    <property type="project" value="HPA"/>
</dbReference>
<dbReference type="GO" id="GO:0005634">
    <property type="term" value="C:nucleus"/>
    <property type="evidence" value="ECO:0000314"/>
    <property type="project" value="ComplexPortal"/>
</dbReference>
<dbReference type="GO" id="GO:0005524">
    <property type="term" value="F:ATP binding"/>
    <property type="evidence" value="ECO:0007669"/>
    <property type="project" value="UniProtKB-KW"/>
</dbReference>
<dbReference type="GO" id="GO:0016887">
    <property type="term" value="F:ATP hydrolysis activity"/>
    <property type="evidence" value="ECO:0007669"/>
    <property type="project" value="RHEA"/>
</dbReference>
<dbReference type="GO" id="GO:0003688">
    <property type="term" value="F:DNA replication origin binding"/>
    <property type="evidence" value="ECO:0007669"/>
    <property type="project" value="InterPro"/>
</dbReference>
<dbReference type="GO" id="GO:0004386">
    <property type="term" value="F:helicase activity"/>
    <property type="evidence" value="ECO:0007669"/>
    <property type="project" value="UniProtKB-KW"/>
</dbReference>
<dbReference type="GO" id="GO:0003697">
    <property type="term" value="F:single-stranded DNA binding"/>
    <property type="evidence" value="ECO:0000318"/>
    <property type="project" value="GO_Central"/>
</dbReference>
<dbReference type="GO" id="GO:0006260">
    <property type="term" value="P:DNA replication"/>
    <property type="evidence" value="ECO:0000304"/>
    <property type="project" value="ProtInc"/>
</dbReference>
<dbReference type="GO" id="GO:0006270">
    <property type="term" value="P:DNA replication initiation"/>
    <property type="evidence" value="ECO:0000318"/>
    <property type="project" value="GO_Central"/>
</dbReference>
<dbReference type="GO" id="GO:0000727">
    <property type="term" value="P:double-strand break repair via break-induced replication"/>
    <property type="evidence" value="ECO:0000318"/>
    <property type="project" value="GO_Central"/>
</dbReference>
<dbReference type="GO" id="GO:0030174">
    <property type="term" value="P:regulation of DNA-templated DNA replication initiation"/>
    <property type="evidence" value="ECO:0000303"/>
    <property type="project" value="ComplexPortal"/>
</dbReference>
<dbReference type="CDD" id="cd17756">
    <property type="entry name" value="MCM5"/>
    <property type="match status" value="1"/>
</dbReference>
<dbReference type="FunFam" id="2.20.28.10:FF:000005">
    <property type="entry name" value="DNA helicase"/>
    <property type="match status" value="1"/>
</dbReference>
<dbReference type="FunFam" id="3.30.1640.10:FF:000006">
    <property type="entry name" value="DNA helicase"/>
    <property type="match status" value="1"/>
</dbReference>
<dbReference type="FunFam" id="3.40.50.300:FF:000241">
    <property type="entry name" value="DNA helicase"/>
    <property type="match status" value="1"/>
</dbReference>
<dbReference type="Gene3D" id="2.20.28.10">
    <property type="match status" value="1"/>
</dbReference>
<dbReference type="Gene3D" id="3.30.1640.10">
    <property type="entry name" value="mini-chromosome maintenance (MCM) complex, chain A, domain 1"/>
    <property type="match status" value="1"/>
</dbReference>
<dbReference type="Gene3D" id="2.40.50.140">
    <property type="entry name" value="Nucleic acid-binding proteins"/>
    <property type="match status" value="1"/>
</dbReference>
<dbReference type="Gene3D" id="3.40.50.300">
    <property type="entry name" value="P-loop containing nucleotide triphosphate hydrolases"/>
    <property type="match status" value="1"/>
</dbReference>
<dbReference type="InterPro" id="IPR031327">
    <property type="entry name" value="MCM"/>
</dbReference>
<dbReference type="InterPro" id="IPR008048">
    <property type="entry name" value="MCM5"/>
</dbReference>
<dbReference type="InterPro" id="IPR054125">
    <property type="entry name" value="MCM5_C"/>
</dbReference>
<dbReference type="InterPro" id="IPR018525">
    <property type="entry name" value="MCM_CS"/>
</dbReference>
<dbReference type="InterPro" id="IPR001208">
    <property type="entry name" value="MCM_dom"/>
</dbReference>
<dbReference type="InterPro" id="IPR041562">
    <property type="entry name" value="MCM_lid"/>
</dbReference>
<dbReference type="InterPro" id="IPR027925">
    <property type="entry name" value="MCM_N"/>
</dbReference>
<dbReference type="InterPro" id="IPR033762">
    <property type="entry name" value="MCM_OB"/>
</dbReference>
<dbReference type="InterPro" id="IPR012340">
    <property type="entry name" value="NA-bd_OB-fold"/>
</dbReference>
<dbReference type="InterPro" id="IPR027417">
    <property type="entry name" value="P-loop_NTPase"/>
</dbReference>
<dbReference type="PANTHER" id="PTHR11630">
    <property type="entry name" value="DNA REPLICATION LICENSING FACTOR MCM FAMILY MEMBER"/>
    <property type="match status" value="1"/>
</dbReference>
<dbReference type="PANTHER" id="PTHR11630:SF42">
    <property type="entry name" value="DNA REPLICATION LICENSING FACTOR MCM5"/>
    <property type="match status" value="1"/>
</dbReference>
<dbReference type="Pfam" id="PF00493">
    <property type="entry name" value="MCM"/>
    <property type="match status" value="1"/>
</dbReference>
<dbReference type="Pfam" id="PF21933">
    <property type="entry name" value="MCM5_C"/>
    <property type="match status" value="1"/>
</dbReference>
<dbReference type="Pfam" id="PF17855">
    <property type="entry name" value="MCM_lid"/>
    <property type="match status" value="1"/>
</dbReference>
<dbReference type="Pfam" id="PF14551">
    <property type="entry name" value="MCM_N"/>
    <property type="match status" value="1"/>
</dbReference>
<dbReference type="Pfam" id="PF17207">
    <property type="entry name" value="MCM_OB"/>
    <property type="match status" value="1"/>
</dbReference>
<dbReference type="PRINTS" id="PR01657">
    <property type="entry name" value="MCMFAMILY"/>
</dbReference>
<dbReference type="PRINTS" id="PR01661">
    <property type="entry name" value="MCMPROTEIN5"/>
</dbReference>
<dbReference type="SMART" id="SM00350">
    <property type="entry name" value="MCM"/>
    <property type="match status" value="1"/>
</dbReference>
<dbReference type="SUPFAM" id="SSF50249">
    <property type="entry name" value="Nucleic acid-binding proteins"/>
    <property type="match status" value="1"/>
</dbReference>
<dbReference type="SUPFAM" id="SSF52540">
    <property type="entry name" value="P-loop containing nucleoside triphosphate hydrolases"/>
    <property type="match status" value="1"/>
</dbReference>
<dbReference type="PROSITE" id="PS00847">
    <property type="entry name" value="MCM_1"/>
    <property type="match status" value="1"/>
</dbReference>
<dbReference type="PROSITE" id="PS50051">
    <property type="entry name" value="MCM_2"/>
    <property type="match status" value="1"/>
</dbReference>
<evidence type="ECO:0000250" key="1">
    <source>
        <dbReference type="UniProtKB" id="P49718"/>
    </source>
</evidence>
<evidence type="ECO:0000269" key="2">
    <source>
    </source>
</evidence>
<evidence type="ECO:0000269" key="3">
    <source>
    </source>
</evidence>
<evidence type="ECO:0000269" key="4">
    <source>
    </source>
</evidence>
<evidence type="ECO:0000269" key="5">
    <source>
    </source>
</evidence>
<evidence type="ECO:0000269" key="6">
    <source>
    </source>
</evidence>
<evidence type="ECO:0000269" key="7">
    <source>
    </source>
</evidence>
<evidence type="ECO:0000269" key="8">
    <source>
    </source>
</evidence>
<evidence type="ECO:0000269" key="9">
    <source>
    </source>
</evidence>
<evidence type="ECO:0000269" key="10">
    <source>
    </source>
</evidence>
<evidence type="ECO:0000269" key="11">
    <source ref="5"/>
</evidence>
<evidence type="ECO:0000303" key="12">
    <source>
    </source>
</evidence>
<evidence type="ECO:0000303" key="13">
    <source ref="3"/>
</evidence>
<evidence type="ECO:0000305" key="14"/>
<evidence type="ECO:0000305" key="15">
    <source>
    </source>
</evidence>
<evidence type="ECO:0000305" key="16">
    <source>
    </source>
</evidence>
<evidence type="ECO:0007744" key="17">
    <source>
        <dbReference type="PDB" id="6XTX"/>
    </source>
</evidence>
<evidence type="ECO:0007744" key="18">
    <source>
        <dbReference type="PDB" id="6XTY"/>
    </source>
</evidence>
<evidence type="ECO:0007744" key="19">
    <source>
        <dbReference type="PDB" id="7PFO"/>
    </source>
</evidence>
<evidence type="ECO:0007744" key="20">
    <source>
        <dbReference type="PDB" id="7PLO"/>
    </source>
</evidence>
<evidence type="ECO:0007744" key="21">
    <source>
    </source>
</evidence>
<evidence type="ECO:0007744" key="22">
    <source>
    </source>
</evidence>
<evidence type="ECO:0007744" key="23">
    <source>
    </source>
</evidence>
<evidence type="ECO:0007744" key="24">
    <source>
    </source>
</evidence>
<evidence type="ECO:0007744" key="25">
    <source>
    </source>
</evidence>
<evidence type="ECO:0007829" key="26">
    <source>
        <dbReference type="PDB" id="8S09"/>
    </source>
</evidence>
<gene>
    <name type="primary">MCM5</name>
    <name type="synonym">CDC46</name>
</gene>
<feature type="initiator methionine" description="Removed" evidence="21 23 24">
    <location>
        <position position="1"/>
    </location>
</feature>
<feature type="chain" id="PRO_0000194107" description="DNA replication licensing factor MCM5">
    <location>
        <begin position="2"/>
        <end position="734"/>
    </location>
</feature>
<feature type="domain" description="MCM">
    <location>
        <begin position="331"/>
        <end position="537"/>
    </location>
</feature>
<feature type="binding site" evidence="15 17">
    <location>
        <position position="371"/>
    </location>
    <ligand>
        <name>ADP</name>
        <dbReference type="ChEBI" id="CHEBI:456216"/>
        <note>ligand shared with MCM3</note>
    </ligand>
</feature>
<feature type="modified residue" description="N-acetylserine" evidence="21 23 24">
    <location>
        <position position="2"/>
    </location>
</feature>
<feature type="modified residue" description="Phosphoserine" evidence="25">
    <location>
        <position position="315"/>
    </location>
</feature>
<feature type="modified residue" description="N6-acetyllysine" evidence="22">
    <location>
        <position position="392"/>
    </location>
</feature>
<feature type="modified residue" description="N6-acetyllysine" evidence="22">
    <location>
        <position position="396"/>
    </location>
</feature>
<feature type="modified residue" description="Phosphoserine" evidence="25">
    <location>
        <position position="605"/>
    </location>
</feature>
<feature type="modified residue" description="N6-acetyllysine" evidence="22">
    <location>
        <position position="696"/>
    </location>
</feature>
<feature type="sequence variant" id="VAR_014813" description="In dbSNP:rs2307334." evidence="11">
    <original>S</original>
    <variation>T</variation>
    <location>
        <position position="136"/>
    </location>
</feature>
<feature type="sequence variant" id="VAR_014814" description="In dbSNP:rs2307340." evidence="11">
    <original>T</original>
    <variation>S</variation>
    <location>
        <position position="180"/>
    </location>
</feature>
<feature type="sequence variant" id="VAR_014815" description="In dbSNP:rs2230933." evidence="11">
    <original>V</original>
    <variation>I</variation>
    <location>
        <position position="258"/>
    </location>
</feature>
<feature type="sequence variant" id="VAR_079198" description="In MGORS8; dbSNP:rs1131692169." evidence="6">
    <original>T</original>
    <variation>I</variation>
    <location>
        <position position="466"/>
    </location>
</feature>
<feature type="sequence conflict" description="In Ref. 7; AAH03656." evidence="14" ref="7">
    <original>Q</original>
    <variation>R</variation>
    <location>
        <position position="41"/>
    </location>
</feature>
<feature type="sequence conflict" description="In Ref. 8." evidence="14" ref="8">
    <original>M</original>
    <variation>W</variation>
    <location>
        <position position="434"/>
    </location>
</feature>
<feature type="sequence conflict" description="In Ref. 3; BAA12176." evidence="14" ref="3">
    <original>E</original>
    <variation>V</variation>
    <location>
        <position position="527"/>
    </location>
</feature>
<feature type="sequence conflict" description="In Ref. 3; BAA12176." evidence="14" ref="3">
    <original>S</original>
    <variation>T</variation>
    <location>
        <position position="591"/>
    </location>
</feature>
<feature type="sequence conflict" description="In Ref. 3; BAA12176." evidence="14" ref="3">
    <original>ARQHERDSDRR</original>
    <variation>PVSTRGTVTA</variation>
    <location>
        <begin position="593"/>
        <end position="603"/>
    </location>
</feature>
<feature type="helix" evidence="26">
    <location>
        <begin position="28"/>
        <end position="41"/>
    </location>
</feature>
<feature type="strand" evidence="26">
    <location>
        <begin position="44"/>
        <end position="46"/>
    </location>
</feature>
<feature type="turn" evidence="26">
    <location>
        <begin position="47"/>
        <end position="49"/>
    </location>
</feature>
<feature type="strand" evidence="26">
    <location>
        <begin position="50"/>
        <end position="52"/>
    </location>
</feature>
<feature type="helix" evidence="26">
    <location>
        <begin position="54"/>
        <end position="65"/>
    </location>
</feature>
<feature type="strand" evidence="26">
    <location>
        <begin position="69"/>
        <end position="73"/>
    </location>
</feature>
<feature type="helix" evidence="26">
    <location>
        <begin position="74"/>
        <end position="80"/>
    </location>
</feature>
<feature type="helix" evidence="26">
    <location>
        <begin position="82"/>
        <end position="88"/>
    </location>
</feature>
<feature type="helix" evidence="26">
    <location>
        <begin position="92"/>
        <end position="110"/>
    </location>
</feature>
<feature type="strand" evidence="26">
    <location>
        <begin position="125"/>
        <end position="129"/>
    </location>
</feature>
<feature type="helix" evidence="26">
    <location>
        <begin position="137"/>
        <end position="139"/>
    </location>
</feature>
<feature type="helix" evidence="26">
    <location>
        <begin position="142"/>
        <end position="144"/>
    </location>
</feature>
<feature type="strand" evidence="26">
    <location>
        <begin position="147"/>
        <end position="158"/>
    </location>
</feature>
<feature type="strand" evidence="26">
    <location>
        <begin position="162"/>
        <end position="175"/>
    </location>
</feature>
<feature type="strand" evidence="26">
    <location>
        <begin position="178"/>
        <end position="183"/>
    </location>
</feature>
<feature type="strand" evidence="26">
    <location>
        <begin position="186"/>
        <end position="189"/>
    </location>
</feature>
<feature type="strand" evidence="26">
    <location>
        <begin position="202"/>
        <end position="204"/>
    </location>
</feature>
<feature type="strand" evidence="26">
    <location>
        <begin position="212"/>
        <end position="214"/>
    </location>
</feature>
<feature type="helix" evidence="26">
    <location>
        <begin position="216"/>
        <end position="218"/>
    </location>
</feature>
<feature type="strand" evidence="26">
    <location>
        <begin position="220"/>
        <end position="230"/>
    </location>
</feature>
<feature type="turn" evidence="26">
    <location>
        <begin position="233"/>
        <end position="235"/>
    </location>
</feature>
<feature type="strand" evidence="26">
    <location>
        <begin position="244"/>
        <end position="250"/>
    </location>
</feature>
<feature type="helix" evidence="26">
    <location>
        <begin position="251"/>
        <end position="253"/>
    </location>
</feature>
<feature type="strand" evidence="26">
    <location>
        <begin position="262"/>
        <end position="271"/>
    </location>
</feature>
<feature type="strand" evidence="26">
    <location>
        <begin position="292"/>
        <end position="301"/>
    </location>
</feature>
<feature type="helix" evidence="26">
    <location>
        <begin position="317"/>
        <end position="326"/>
    </location>
</feature>
<feature type="helix" evidence="26">
    <location>
        <begin position="331"/>
        <end position="338"/>
    </location>
</feature>
<feature type="helix" evidence="26">
    <location>
        <begin position="347"/>
        <end position="358"/>
    </location>
</feature>
<feature type="strand" evidence="26">
    <location>
        <begin position="376"/>
        <end position="381"/>
    </location>
</feature>
<feature type="helix" evidence="26">
    <location>
        <begin position="388"/>
        <end position="397"/>
    </location>
</feature>
<feature type="strand" evidence="26">
    <location>
        <begin position="398"/>
        <end position="405"/>
    </location>
</feature>
<feature type="strand" evidence="26">
    <location>
        <begin position="417"/>
        <end position="420"/>
    </location>
</feature>
<feature type="strand" evidence="26">
    <location>
        <begin position="422"/>
        <end position="424"/>
    </location>
</feature>
<feature type="strand" evidence="26">
    <location>
        <begin position="427"/>
        <end position="430"/>
    </location>
</feature>
<feature type="turn" evidence="26">
    <location>
        <begin position="433"/>
        <end position="436"/>
    </location>
</feature>
<feature type="strand" evidence="26">
    <location>
        <begin position="438"/>
        <end position="445"/>
    </location>
</feature>
<feature type="helix" evidence="26">
    <location>
        <begin position="452"/>
        <end position="463"/>
    </location>
</feature>
<feature type="strand" evidence="26">
    <location>
        <begin position="465"/>
        <end position="471"/>
    </location>
</feature>
<feature type="strand" evidence="26">
    <location>
        <begin position="474"/>
        <end position="479"/>
    </location>
</feature>
<feature type="strand" evidence="26">
    <location>
        <begin position="483"/>
        <end position="488"/>
    </location>
</feature>
<feature type="strand" evidence="26">
    <location>
        <begin position="491"/>
        <end position="494"/>
    </location>
</feature>
<feature type="turn" evidence="26">
    <location>
        <begin position="497"/>
        <end position="499"/>
    </location>
</feature>
<feature type="helix" evidence="26">
    <location>
        <begin position="508"/>
        <end position="512"/>
    </location>
</feature>
<feature type="strand" evidence="26">
    <location>
        <begin position="515"/>
        <end position="520"/>
    </location>
</feature>
<feature type="helix" evidence="26">
    <location>
        <begin position="526"/>
        <end position="542"/>
    </location>
</feature>
<feature type="turn" evidence="26">
    <location>
        <begin position="543"/>
        <end position="545"/>
    </location>
</feature>
<feature type="helix" evidence="26">
    <location>
        <begin position="556"/>
        <end position="569"/>
    </location>
</feature>
<feature type="helix" evidence="26">
    <location>
        <begin position="576"/>
        <end position="600"/>
    </location>
</feature>
<feature type="helix" evidence="26">
    <location>
        <begin position="610"/>
        <end position="625"/>
    </location>
</feature>
<feature type="turn" evidence="26">
    <location>
        <begin position="626"/>
        <end position="628"/>
    </location>
</feature>
<feature type="helix" evidence="26">
    <location>
        <begin position="634"/>
        <end position="652"/>
    </location>
</feature>
<feature type="helix" evidence="26">
    <location>
        <begin position="668"/>
        <end position="682"/>
    </location>
</feature>
<feature type="strand" evidence="26">
    <location>
        <begin position="688"/>
        <end position="690"/>
    </location>
</feature>
<feature type="helix" evidence="26">
    <location>
        <begin position="691"/>
        <end position="700"/>
    </location>
</feature>
<feature type="helix" evidence="26">
    <location>
        <begin position="705"/>
        <end position="718"/>
    </location>
</feature>
<feature type="strand" evidence="26">
    <location>
        <begin position="720"/>
        <end position="723"/>
    </location>
</feature>
<feature type="strand" evidence="26">
    <location>
        <begin position="729"/>
        <end position="732"/>
    </location>
</feature>